<evidence type="ECO:0000255" key="1">
    <source>
        <dbReference type="HAMAP-Rule" id="MF_00082"/>
    </source>
</evidence>
<protein>
    <recommendedName>
        <fullName evidence="1">Acetylglutamate kinase</fullName>
        <ecNumber evidence="1">2.7.2.8</ecNumber>
    </recommendedName>
    <alternativeName>
        <fullName evidence="1">N-acetyl-L-glutamate 5-phosphotransferase</fullName>
    </alternativeName>
    <alternativeName>
        <fullName evidence="1">NAG kinase</fullName>
        <shortName evidence="1">NAGK</shortName>
    </alternativeName>
</protein>
<gene>
    <name evidence="1" type="primary">argB</name>
    <name type="ordered locus">NT01EI_3846</name>
</gene>
<organism>
    <name type="scientific">Edwardsiella ictaluri (strain 93-146)</name>
    <dbReference type="NCBI Taxonomy" id="634503"/>
    <lineage>
        <taxon>Bacteria</taxon>
        <taxon>Pseudomonadati</taxon>
        <taxon>Pseudomonadota</taxon>
        <taxon>Gammaproteobacteria</taxon>
        <taxon>Enterobacterales</taxon>
        <taxon>Hafniaceae</taxon>
        <taxon>Edwardsiella</taxon>
    </lineage>
</organism>
<keyword id="KW-0028">Amino-acid biosynthesis</keyword>
<keyword id="KW-0055">Arginine biosynthesis</keyword>
<keyword id="KW-0067">ATP-binding</keyword>
<keyword id="KW-0963">Cytoplasm</keyword>
<keyword id="KW-0418">Kinase</keyword>
<keyword id="KW-0547">Nucleotide-binding</keyword>
<keyword id="KW-0808">Transferase</keyword>
<sequence>MDPLIIKLGGVLLDNPQAMERLFQALLAYRHHDRRPIVIVHGGGCLVDELMVRLQLPVVKRQGLRVTPADQIGIISGALAGTANKTLQACAIAHGLAAIGLSLADGGAVQVSPLDASLGHVGQALPGSPLLLRQLLAADFLPIVSSIGISADGMLLNVNADQAATALAATLGADLLMLSDVSGILDGKGQRIAEMTAQKAQRLIEQGIITDGMVVKVNAALEAARTLGRPVDIAGWRHAEKLPALFNGEAVGTRIHA</sequence>
<comment type="function">
    <text evidence="1">Catalyzes the ATP-dependent phosphorylation of N-acetyl-L-glutamate.</text>
</comment>
<comment type="catalytic activity">
    <reaction evidence="1">
        <text>N-acetyl-L-glutamate + ATP = N-acetyl-L-glutamyl 5-phosphate + ADP</text>
        <dbReference type="Rhea" id="RHEA:14629"/>
        <dbReference type="ChEBI" id="CHEBI:30616"/>
        <dbReference type="ChEBI" id="CHEBI:44337"/>
        <dbReference type="ChEBI" id="CHEBI:57936"/>
        <dbReference type="ChEBI" id="CHEBI:456216"/>
        <dbReference type="EC" id="2.7.2.8"/>
    </reaction>
</comment>
<comment type="pathway">
    <text evidence="1">Amino-acid biosynthesis; L-arginine biosynthesis; N(2)-acetyl-L-ornithine from L-glutamate: step 2/4.</text>
</comment>
<comment type="subunit">
    <text evidence="1">Homodimer.</text>
</comment>
<comment type="subcellular location">
    <subcellularLocation>
        <location evidence="1">Cytoplasm</location>
    </subcellularLocation>
</comment>
<comment type="similarity">
    <text evidence="1">Belongs to the acetylglutamate kinase family. ArgB subfamily.</text>
</comment>
<dbReference type="EC" id="2.7.2.8" evidence="1"/>
<dbReference type="EMBL" id="CP001600">
    <property type="protein sequence ID" value="ACR70965.1"/>
    <property type="molecule type" value="Genomic_DNA"/>
</dbReference>
<dbReference type="RefSeq" id="WP_015872996.1">
    <property type="nucleotide sequence ID" value="NZ_CP169062.1"/>
</dbReference>
<dbReference type="SMR" id="C5BC59"/>
<dbReference type="STRING" id="67780.B6E78_10795"/>
<dbReference type="GeneID" id="69540670"/>
<dbReference type="KEGG" id="eic:NT01EI_3846"/>
<dbReference type="PATRIC" id="fig|634503.3.peg.3432"/>
<dbReference type="HOGENOM" id="CLU_053680_1_1_6"/>
<dbReference type="OrthoDB" id="5915023at2"/>
<dbReference type="UniPathway" id="UPA00068">
    <property type="reaction ID" value="UER00107"/>
</dbReference>
<dbReference type="Proteomes" id="UP000001485">
    <property type="component" value="Chromosome"/>
</dbReference>
<dbReference type="GO" id="GO:0005737">
    <property type="term" value="C:cytoplasm"/>
    <property type="evidence" value="ECO:0007669"/>
    <property type="project" value="UniProtKB-SubCell"/>
</dbReference>
<dbReference type="GO" id="GO:0003991">
    <property type="term" value="F:acetylglutamate kinase activity"/>
    <property type="evidence" value="ECO:0007669"/>
    <property type="project" value="UniProtKB-UniRule"/>
</dbReference>
<dbReference type="GO" id="GO:0005524">
    <property type="term" value="F:ATP binding"/>
    <property type="evidence" value="ECO:0007669"/>
    <property type="project" value="UniProtKB-UniRule"/>
</dbReference>
<dbReference type="GO" id="GO:0042450">
    <property type="term" value="P:arginine biosynthetic process via ornithine"/>
    <property type="evidence" value="ECO:0007669"/>
    <property type="project" value="UniProtKB-UniRule"/>
</dbReference>
<dbReference type="GO" id="GO:0006526">
    <property type="term" value="P:L-arginine biosynthetic process"/>
    <property type="evidence" value="ECO:0007669"/>
    <property type="project" value="UniProtKB-UniPathway"/>
</dbReference>
<dbReference type="FunFam" id="3.40.1160.10:FF:000008">
    <property type="entry name" value="Acetylglutamate kinase"/>
    <property type="match status" value="1"/>
</dbReference>
<dbReference type="Gene3D" id="3.40.1160.10">
    <property type="entry name" value="Acetylglutamate kinase-like"/>
    <property type="match status" value="1"/>
</dbReference>
<dbReference type="HAMAP" id="MF_00082">
    <property type="entry name" value="ArgB"/>
    <property type="match status" value="1"/>
</dbReference>
<dbReference type="InterPro" id="IPR036393">
    <property type="entry name" value="AceGlu_kinase-like_sf"/>
</dbReference>
<dbReference type="InterPro" id="IPR004662">
    <property type="entry name" value="AcgluKinase_fam"/>
</dbReference>
<dbReference type="InterPro" id="IPR037528">
    <property type="entry name" value="ArgB"/>
</dbReference>
<dbReference type="InterPro" id="IPR001048">
    <property type="entry name" value="Asp/Glu/Uridylate_kinase"/>
</dbReference>
<dbReference type="NCBIfam" id="TIGR00761">
    <property type="entry name" value="argB"/>
    <property type="match status" value="1"/>
</dbReference>
<dbReference type="PANTHER" id="PTHR23342">
    <property type="entry name" value="N-ACETYLGLUTAMATE SYNTHASE"/>
    <property type="match status" value="1"/>
</dbReference>
<dbReference type="PANTHER" id="PTHR23342:SF0">
    <property type="entry name" value="N-ACETYLGLUTAMATE SYNTHASE, MITOCHONDRIAL"/>
    <property type="match status" value="1"/>
</dbReference>
<dbReference type="Pfam" id="PF00696">
    <property type="entry name" value="AA_kinase"/>
    <property type="match status" value="1"/>
</dbReference>
<dbReference type="PIRSF" id="PIRSF000728">
    <property type="entry name" value="NAGK"/>
    <property type="match status" value="1"/>
</dbReference>
<dbReference type="SUPFAM" id="SSF53633">
    <property type="entry name" value="Carbamate kinase-like"/>
    <property type="match status" value="1"/>
</dbReference>
<feature type="chain" id="PRO_1000202561" description="Acetylglutamate kinase">
    <location>
        <begin position="1"/>
        <end position="257"/>
    </location>
</feature>
<feature type="binding site" evidence="1">
    <location>
        <begin position="43"/>
        <end position="44"/>
    </location>
    <ligand>
        <name>substrate</name>
    </ligand>
</feature>
<feature type="binding site" evidence="1">
    <location>
        <position position="65"/>
    </location>
    <ligand>
        <name>substrate</name>
    </ligand>
</feature>
<feature type="binding site" evidence="1">
    <location>
        <position position="157"/>
    </location>
    <ligand>
        <name>substrate</name>
    </ligand>
</feature>
<feature type="binding site" evidence="1">
    <location>
        <begin position="180"/>
        <end position="185"/>
    </location>
    <ligand>
        <name>ATP</name>
        <dbReference type="ChEBI" id="CHEBI:30616"/>
    </ligand>
</feature>
<feature type="binding site" evidence="1">
    <location>
        <begin position="208"/>
        <end position="210"/>
    </location>
    <ligand>
        <name>ATP</name>
        <dbReference type="ChEBI" id="CHEBI:30616"/>
    </ligand>
</feature>
<feature type="site" description="Transition state stabilizer" evidence="1">
    <location>
        <position position="7"/>
    </location>
</feature>
<feature type="site" description="Transition state stabilizer" evidence="1">
    <location>
        <position position="216"/>
    </location>
</feature>
<reference key="1">
    <citation type="submission" date="2009-03" db="EMBL/GenBank/DDBJ databases">
        <title>Complete genome sequence of Edwardsiella ictaluri 93-146.</title>
        <authorList>
            <person name="Williams M.L."/>
            <person name="Gillaspy A.F."/>
            <person name="Dyer D.W."/>
            <person name="Thune R.L."/>
            <person name="Waldbieser G.C."/>
            <person name="Schuster S.C."/>
            <person name="Gipson J."/>
            <person name="Zaitshik J."/>
            <person name="Landry C."/>
            <person name="Lawrence M.L."/>
        </authorList>
    </citation>
    <scope>NUCLEOTIDE SEQUENCE [LARGE SCALE GENOMIC DNA]</scope>
    <source>
        <strain>93-146</strain>
    </source>
</reference>
<accession>C5BC59</accession>
<name>ARGB_EDWI9</name>
<proteinExistence type="inferred from homology"/>